<proteinExistence type="inferred from homology"/>
<gene>
    <name evidence="1" type="primary">cysS</name>
    <name type="ordered locus">Mmwyl1_2110</name>
</gene>
<accession>A6VX53</accession>
<evidence type="ECO:0000255" key="1">
    <source>
        <dbReference type="HAMAP-Rule" id="MF_00041"/>
    </source>
</evidence>
<reference key="1">
    <citation type="submission" date="2007-06" db="EMBL/GenBank/DDBJ databases">
        <title>Complete sequence of Marinomonas sp. MWYL1.</title>
        <authorList>
            <consortium name="US DOE Joint Genome Institute"/>
            <person name="Copeland A."/>
            <person name="Lucas S."/>
            <person name="Lapidus A."/>
            <person name="Barry K."/>
            <person name="Glavina del Rio T."/>
            <person name="Dalin E."/>
            <person name="Tice H."/>
            <person name="Pitluck S."/>
            <person name="Kiss H."/>
            <person name="Brettin T."/>
            <person name="Bruce D."/>
            <person name="Detter J.C."/>
            <person name="Han C."/>
            <person name="Schmutz J."/>
            <person name="Larimer F."/>
            <person name="Land M."/>
            <person name="Hauser L."/>
            <person name="Kyrpides N."/>
            <person name="Kim E."/>
            <person name="Johnston A.W.B."/>
            <person name="Todd J.D."/>
            <person name="Rogers R."/>
            <person name="Wexler M."/>
            <person name="Bond P.L."/>
            <person name="Li Y."/>
            <person name="Richardson P."/>
        </authorList>
    </citation>
    <scope>NUCLEOTIDE SEQUENCE [LARGE SCALE GENOMIC DNA]</scope>
    <source>
        <strain>MWYL1</strain>
    </source>
</reference>
<protein>
    <recommendedName>
        <fullName evidence="1">Cysteine--tRNA ligase</fullName>
        <ecNumber evidence="1">6.1.1.16</ecNumber>
    </recommendedName>
    <alternativeName>
        <fullName evidence="1">Cysteinyl-tRNA synthetase</fullName>
        <shortName evidence="1">CysRS</shortName>
    </alternativeName>
</protein>
<organism>
    <name type="scientific">Marinomonas sp. (strain MWYL1)</name>
    <dbReference type="NCBI Taxonomy" id="400668"/>
    <lineage>
        <taxon>Bacteria</taxon>
        <taxon>Pseudomonadati</taxon>
        <taxon>Pseudomonadota</taxon>
        <taxon>Gammaproteobacteria</taxon>
        <taxon>Oceanospirillales</taxon>
        <taxon>Oceanospirillaceae</taxon>
        <taxon>Marinomonas</taxon>
    </lineage>
</organism>
<comment type="catalytic activity">
    <reaction evidence="1">
        <text>tRNA(Cys) + L-cysteine + ATP = L-cysteinyl-tRNA(Cys) + AMP + diphosphate</text>
        <dbReference type="Rhea" id="RHEA:17773"/>
        <dbReference type="Rhea" id="RHEA-COMP:9661"/>
        <dbReference type="Rhea" id="RHEA-COMP:9679"/>
        <dbReference type="ChEBI" id="CHEBI:30616"/>
        <dbReference type="ChEBI" id="CHEBI:33019"/>
        <dbReference type="ChEBI" id="CHEBI:35235"/>
        <dbReference type="ChEBI" id="CHEBI:78442"/>
        <dbReference type="ChEBI" id="CHEBI:78517"/>
        <dbReference type="ChEBI" id="CHEBI:456215"/>
        <dbReference type="EC" id="6.1.1.16"/>
    </reaction>
</comment>
<comment type="cofactor">
    <cofactor evidence="1">
        <name>Zn(2+)</name>
        <dbReference type="ChEBI" id="CHEBI:29105"/>
    </cofactor>
    <text evidence="1">Binds 1 zinc ion per subunit.</text>
</comment>
<comment type="subunit">
    <text evidence="1">Monomer.</text>
</comment>
<comment type="subcellular location">
    <subcellularLocation>
        <location evidence="1">Cytoplasm</location>
    </subcellularLocation>
</comment>
<comment type="similarity">
    <text evidence="1">Belongs to the class-I aminoacyl-tRNA synthetase family.</text>
</comment>
<feature type="chain" id="PRO_1000074620" description="Cysteine--tRNA ligase">
    <location>
        <begin position="1"/>
        <end position="460"/>
    </location>
</feature>
<feature type="short sequence motif" description="'HIGH' region">
    <location>
        <begin position="30"/>
        <end position="40"/>
    </location>
</feature>
<feature type="short sequence motif" description="'KMSKS' region">
    <location>
        <begin position="266"/>
        <end position="270"/>
    </location>
</feature>
<feature type="binding site" evidence="1">
    <location>
        <position position="28"/>
    </location>
    <ligand>
        <name>Zn(2+)</name>
        <dbReference type="ChEBI" id="CHEBI:29105"/>
    </ligand>
</feature>
<feature type="binding site" evidence="1">
    <location>
        <position position="209"/>
    </location>
    <ligand>
        <name>Zn(2+)</name>
        <dbReference type="ChEBI" id="CHEBI:29105"/>
    </ligand>
</feature>
<feature type="binding site" evidence="1">
    <location>
        <position position="234"/>
    </location>
    <ligand>
        <name>Zn(2+)</name>
        <dbReference type="ChEBI" id="CHEBI:29105"/>
    </ligand>
</feature>
<feature type="binding site" evidence="1">
    <location>
        <position position="238"/>
    </location>
    <ligand>
        <name>Zn(2+)</name>
        <dbReference type="ChEBI" id="CHEBI:29105"/>
    </ligand>
</feature>
<feature type="binding site" evidence="1">
    <location>
        <position position="269"/>
    </location>
    <ligand>
        <name>ATP</name>
        <dbReference type="ChEBI" id="CHEBI:30616"/>
    </ligand>
</feature>
<dbReference type="EC" id="6.1.1.16" evidence="1"/>
<dbReference type="EMBL" id="CP000749">
    <property type="protein sequence ID" value="ABR71032.1"/>
    <property type="molecule type" value="Genomic_DNA"/>
</dbReference>
<dbReference type="SMR" id="A6VX53"/>
<dbReference type="STRING" id="400668.Mmwyl1_2110"/>
<dbReference type="KEGG" id="mmw:Mmwyl1_2110"/>
<dbReference type="eggNOG" id="COG0215">
    <property type="taxonomic scope" value="Bacteria"/>
</dbReference>
<dbReference type="HOGENOM" id="CLU_013528_0_1_6"/>
<dbReference type="OrthoDB" id="9815130at2"/>
<dbReference type="GO" id="GO:0005829">
    <property type="term" value="C:cytosol"/>
    <property type="evidence" value="ECO:0007669"/>
    <property type="project" value="TreeGrafter"/>
</dbReference>
<dbReference type="GO" id="GO:0005524">
    <property type="term" value="F:ATP binding"/>
    <property type="evidence" value="ECO:0007669"/>
    <property type="project" value="UniProtKB-UniRule"/>
</dbReference>
<dbReference type="GO" id="GO:0004817">
    <property type="term" value="F:cysteine-tRNA ligase activity"/>
    <property type="evidence" value="ECO:0007669"/>
    <property type="project" value="UniProtKB-UniRule"/>
</dbReference>
<dbReference type="GO" id="GO:0008270">
    <property type="term" value="F:zinc ion binding"/>
    <property type="evidence" value="ECO:0007669"/>
    <property type="project" value="UniProtKB-UniRule"/>
</dbReference>
<dbReference type="GO" id="GO:0006423">
    <property type="term" value="P:cysteinyl-tRNA aminoacylation"/>
    <property type="evidence" value="ECO:0007669"/>
    <property type="project" value="UniProtKB-UniRule"/>
</dbReference>
<dbReference type="CDD" id="cd07963">
    <property type="entry name" value="Anticodon_Ia_Cys"/>
    <property type="match status" value="1"/>
</dbReference>
<dbReference type="CDD" id="cd00672">
    <property type="entry name" value="CysRS_core"/>
    <property type="match status" value="1"/>
</dbReference>
<dbReference type="FunFam" id="3.40.50.620:FF:000009">
    <property type="entry name" value="Cysteine--tRNA ligase"/>
    <property type="match status" value="1"/>
</dbReference>
<dbReference type="Gene3D" id="1.20.120.1910">
    <property type="entry name" value="Cysteine-tRNA ligase, C-terminal anti-codon recognition domain"/>
    <property type="match status" value="1"/>
</dbReference>
<dbReference type="Gene3D" id="3.40.50.620">
    <property type="entry name" value="HUPs"/>
    <property type="match status" value="1"/>
</dbReference>
<dbReference type="HAMAP" id="MF_00041">
    <property type="entry name" value="Cys_tRNA_synth"/>
    <property type="match status" value="1"/>
</dbReference>
<dbReference type="InterPro" id="IPR015803">
    <property type="entry name" value="Cys-tRNA-ligase"/>
</dbReference>
<dbReference type="InterPro" id="IPR015273">
    <property type="entry name" value="Cys-tRNA-synt_Ia_DALR"/>
</dbReference>
<dbReference type="InterPro" id="IPR024909">
    <property type="entry name" value="Cys-tRNA/MSH_ligase"/>
</dbReference>
<dbReference type="InterPro" id="IPR056411">
    <property type="entry name" value="CysS_C"/>
</dbReference>
<dbReference type="InterPro" id="IPR014729">
    <property type="entry name" value="Rossmann-like_a/b/a_fold"/>
</dbReference>
<dbReference type="InterPro" id="IPR032678">
    <property type="entry name" value="tRNA-synt_1_cat_dom"/>
</dbReference>
<dbReference type="InterPro" id="IPR009080">
    <property type="entry name" value="tRNAsynth_Ia_anticodon-bd"/>
</dbReference>
<dbReference type="NCBIfam" id="TIGR00435">
    <property type="entry name" value="cysS"/>
    <property type="match status" value="1"/>
</dbReference>
<dbReference type="PANTHER" id="PTHR10890:SF3">
    <property type="entry name" value="CYSTEINE--TRNA LIGASE, CYTOPLASMIC"/>
    <property type="match status" value="1"/>
</dbReference>
<dbReference type="PANTHER" id="PTHR10890">
    <property type="entry name" value="CYSTEINYL-TRNA SYNTHETASE"/>
    <property type="match status" value="1"/>
</dbReference>
<dbReference type="Pfam" id="PF23493">
    <property type="entry name" value="CysS_C"/>
    <property type="match status" value="1"/>
</dbReference>
<dbReference type="Pfam" id="PF09190">
    <property type="entry name" value="DALR_2"/>
    <property type="match status" value="1"/>
</dbReference>
<dbReference type="Pfam" id="PF01406">
    <property type="entry name" value="tRNA-synt_1e"/>
    <property type="match status" value="1"/>
</dbReference>
<dbReference type="PRINTS" id="PR00983">
    <property type="entry name" value="TRNASYNTHCYS"/>
</dbReference>
<dbReference type="SMART" id="SM00840">
    <property type="entry name" value="DALR_2"/>
    <property type="match status" value="1"/>
</dbReference>
<dbReference type="SUPFAM" id="SSF47323">
    <property type="entry name" value="Anticodon-binding domain of a subclass of class I aminoacyl-tRNA synthetases"/>
    <property type="match status" value="1"/>
</dbReference>
<dbReference type="SUPFAM" id="SSF52374">
    <property type="entry name" value="Nucleotidylyl transferase"/>
    <property type="match status" value="1"/>
</dbReference>
<name>SYC_MARMS</name>
<sequence length="460" mass="52306">MLKIYNTLSGKKEIFKPIEEGKVGMYVCGNTVYDFCHIGHARAMISFDVISRFIRHLGYELNYVRNITDVDDKIIKRAEENNESTQSLTERMIAAQREDELRLGNKMPDREPKATEFMQEIIDMVQVLIDKGFAYQGTSGDVYYRATKFKDYGKLNNRKLEDMLAGARIDVEVAKEHPADFVLWKQAKAGEVSWSSPWGEGRPGWHIECSAMSTNCLGSHFDIHGGGPDLKFPHHENEIAQSEAATGKEYVNYWMHCGAVRVNNEKMSKSLGNFFTVRDVLAKFNPEVVRYLMVSSQYRSAIDYSDQSLLEAKVALERLYTALRQQQVAESFEPTVFTERFEEAMKDDFNTAVAVSVLFELVRELNKAKTEDANKASLLAAELRSLAELLGLLYQDPEYFLQNSTVSEGLGEVAIQALIDERTQARKDKNFARSDEIRDELASQGIELLDSREGTTWTRS</sequence>
<keyword id="KW-0030">Aminoacyl-tRNA synthetase</keyword>
<keyword id="KW-0067">ATP-binding</keyword>
<keyword id="KW-0963">Cytoplasm</keyword>
<keyword id="KW-0436">Ligase</keyword>
<keyword id="KW-0479">Metal-binding</keyword>
<keyword id="KW-0547">Nucleotide-binding</keyword>
<keyword id="KW-0648">Protein biosynthesis</keyword>
<keyword id="KW-0862">Zinc</keyword>